<evidence type="ECO:0000255" key="1">
    <source>
        <dbReference type="HAMAP-Rule" id="MF_00621"/>
    </source>
</evidence>
<keyword id="KW-0963">Cytoplasm</keyword>
<keyword id="KW-0238">DNA-binding</keyword>
<keyword id="KW-1185">Reference proteome</keyword>
<keyword id="KW-0678">Repressor</keyword>
<keyword id="KW-0804">Transcription</keyword>
<keyword id="KW-0805">Transcription regulation</keyword>
<protein>
    <recommendedName>
        <fullName evidence="1">Global transcriptional regulator CodY</fullName>
    </recommendedName>
</protein>
<name>CODY_STRA5</name>
<dbReference type="EMBL" id="AE009948">
    <property type="protein sequence ID" value="AAN00539.1"/>
    <property type="molecule type" value="Genomic_DNA"/>
</dbReference>
<dbReference type="RefSeq" id="NP_688666.1">
    <property type="nucleotide sequence ID" value="NC_004116.1"/>
</dbReference>
<dbReference type="RefSeq" id="WP_001133183.1">
    <property type="nucleotide sequence ID" value="NC_004116.1"/>
</dbReference>
<dbReference type="SMR" id="P63847"/>
<dbReference type="STRING" id="208435.SAG1675"/>
<dbReference type="GeneID" id="66886521"/>
<dbReference type="KEGG" id="sag:SAG1675"/>
<dbReference type="PATRIC" id="fig|208435.3.peg.1684"/>
<dbReference type="HOGENOM" id="CLU_089581_0_0_9"/>
<dbReference type="OrthoDB" id="2056at2"/>
<dbReference type="Proteomes" id="UP000000821">
    <property type="component" value="Chromosome"/>
</dbReference>
<dbReference type="GO" id="GO:0005737">
    <property type="term" value="C:cytoplasm"/>
    <property type="evidence" value="ECO:0007669"/>
    <property type="project" value="UniProtKB-SubCell"/>
</dbReference>
<dbReference type="GO" id="GO:0003677">
    <property type="term" value="F:DNA binding"/>
    <property type="evidence" value="ECO:0007669"/>
    <property type="project" value="UniProtKB-UniRule"/>
</dbReference>
<dbReference type="GO" id="GO:0003700">
    <property type="term" value="F:DNA-binding transcription factor activity"/>
    <property type="evidence" value="ECO:0007669"/>
    <property type="project" value="InterPro"/>
</dbReference>
<dbReference type="GO" id="GO:0005525">
    <property type="term" value="F:GTP binding"/>
    <property type="evidence" value="ECO:0007669"/>
    <property type="project" value="InterPro"/>
</dbReference>
<dbReference type="GO" id="GO:0045892">
    <property type="term" value="P:negative regulation of DNA-templated transcription"/>
    <property type="evidence" value="ECO:0007669"/>
    <property type="project" value="UniProtKB-UniRule"/>
</dbReference>
<dbReference type="CDD" id="cd00090">
    <property type="entry name" value="HTH_ARSR"/>
    <property type="match status" value="1"/>
</dbReference>
<dbReference type="FunFam" id="1.10.10.10:FF:000034">
    <property type="entry name" value="GTP-sensing transcriptional pleiotropic repressor CodY"/>
    <property type="match status" value="1"/>
</dbReference>
<dbReference type="FunFam" id="3.30.450.40:FF:000003">
    <property type="entry name" value="GTP-sensing transcriptional pleiotropic repressor CodY"/>
    <property type="match status" value="1"/>
</dbReference>
<dbReference type="Gene3D" id="3.30.450.40">
    <property type="match status" value="1"/>
</dbReference>
<dbReference type="Gene3D" id="1.10.10.10">
    <property type="entry name" value="Winged helix-like DNA-binding domain superfamily/Winged helix DNA-binding domain"/>
    <property type="match status" value="1"/>
</dbReference>
<dbReference type="HAMAP" id="MF_00621">
    <property type="entry name" value="HTH_type_CodY"/>
    <property type="match status" value="1"/>
</dbReference>
<dbReference type="InterPro" id="IPR011991">
    <property type="entry name" value="ArsR-like_HTH"/>
</dbReference>
<dbReference type="InterPro" id="IPR014154">
    <property type="entry name" value="CodY"/>
</dbReference>
<dbReference type="InterPro" id="IPR029016">
    <property type="entry name" value="GAF-like_dom_sf"/>
</dbReference>
<dbReference type="InterPro" id="IPR013198">
    <property type="entry name" value="GTP_trans_reg_CodY_C"/>
</dbReference>
<dbReference type="InterPro" id="IPR010312">
    <property type="entry name" value="Transc_reg_CodY_N"/>
</dbReference>
<dbReference type="InterPro" id="IPR036388">
    <property type="entry name" value="WH-like_DNA-bd_sf"/>
</dbReference>
<dbReference type="InterPro" id="IPR036390">
    <property type="entry name" value="WH_DNA-bd_sf"/>
</dbReference>
<dbReference type="NCBIfam" id="TIGR02787">
    <property type="entry name" value="codY_Gpos"/>
    <property type="match status" value="1"/>
</dbReference>
<dbReference type="NCBIfam" id="NF003170">
    <property type="entry name" value="PRK04158.1"/>
    <property type="match status" value="1"/>
</dbReference>
<dbReference type="PANTHER" id="PTHR40062:SF1">
    <property type="entry name" value="GLOBAL TRANSCRIPTIONAL REGULATOR CODY"/>
    <property type="match status" value="1"/>
</dbReference>
<dbReference type="PANTHER" id="PTHR40062">
    <property type="entry name" value="GTP-SENSING TRANSCRIPTIONAL PLEIOTROPIC REPRESSOR CODY"/>
    <property type="match status" value="1"/>
</dbReference>
<dbReference type="Pfam" id="PF06018">
    <property type="entry name" value="CodY"/>
    <property type="match status" value="1"/>
</dbReference>
<dbReference type="Pfam" id="PF08222">
    <property type="entry name" value="HTH_CodY"/>
    <property type="match status" value="1"/>
</dbReference>
<dbReference type="PIRSF" id="PIRSF011572">
    <property type="entry name" value="GTP_sensing_CodY"/>
    <property type="match status" value="1"/>
</dbReference>
<dbReference type="SUPFAM" id="SSF46785">
    <property type="entry name" value="Winged helix' DNA-binding domain"/>
    <property type="match status" value="1"/>
</dbReference>
<accession>P63847</accession>
<accession>P59387</accession>
<feature type="chain" id="PRO_0000213240" description="Global transcriptional regulator CodY">
    <location>
        <begin position="1"/>
        <end position="261"/>
    </location>
</feature>
<feature type="DNA-binding region" description="H-T-H motif" evidence="1">
    <location>
        <begin position="207"/>
        <end position="226"/>
    </location>
</feature>
<feature type="region of interest" description="GAF domain" evidence="1">
    <location>
        <begin position="1"/>
        <end position="159"/>
    </location>
</feature>
<proteinExistence type="inferred from homology"/>
<comment type="function">
    <text evidence="1">DNA-binding global transcriptional regulator which is involved in the adaptive response to starvation and acts by directly or indirectly controlling the expression of numerous genes in response to nutrient availability. During rapid exponential growth, CodY is highly active and represses genes whose products allow adaptation to nutrient depletion.</text>
</comment>
<comment type="subcellular location">
    <subcellularLocation>
        <location evidence="1">Cytoplasm</location>
    </subcellularLocation>
</comment>
<comment type="similarity">
    <text evidence="1">Belongs to the CodY family.</text>
</comment>
<gene>
    <name evidence="1" type="primary">codY</name>
    <name type="ordered locus">SAG1675</name>
</gene>
<reference key="1">
    <citation type="journal article" date="2002" name="Proc. Natl. Acad. Sci. U.S.A.">
        <title>Complete genome sequence and comparative genomic analysis of an emerging human pathogen, serotype V Streptococcus agalactiae.</title>
        <authorList>
            <person name="Tettelin H."/>
            <person name="Masignani V."/>
            <person name="Cieslewicz M.J."/>
            <person name="Eisen J.A."/>
            <person name="Peterson S.N."/>
            <person name="Wessels M.R."/>
            <person name="Paulsen I.T."/>
            <person name="Nelson K.E."/>
            <person name="Margarit I."/>
            <person name="Read T.D."/>
            <person name="Madoff L.C."/>
            <person name="Wolf A.M."/>
            <person name="Beanan M.J."/>
            <person name="Brinkac L.M."/>
            <person name="Daugherty S.C."/>
            <person name="DeBoy R.T."/>
            <person name="Durkin A.S."/>
            <person name="Kolonay J.F."/>
            <person name="Madupu R."/>
            <person name="Lewis M.R."/>
            <person name="Radune D."/>
            <person name="Fedorova N.B."/>
            <person name="Scanlan D."/>
            <person name="Khouri H.M."/>
            <person name="Mulligan S."/>
            <person name="Carty H.A."/>
            <person name="Cline R.T."/>
            <person name="Van Aken S.E."/>
            <person name="Gill J."/>
            <person name="Scarselli M."/>
            <person name="Mora M."/>
            <person name="Iacobini E.T."/>
            <person name="Brettoni C."/>
            <person name="Galli G."/>
            <person name="Mariani M."/>
            <person name="Vegni F."/>
            <person name="Maione D."/>
            <person name="Rinaudo D."/>
            <person name="Rappuoli R."/>
            <person name="Telford J.L."/>
            <person name="Kasper D.L."/>
            <person name="Grandi G."/>
            <person name="Fraser C.M."/>
        </authorList>
    </citation>
    <scope>NUCLEOTIDE SEQUENCE [LARGE SCALE GENOMIC DNA]</scope>
    <source>
        <strain>ATCC BAA-611 / 2603 V/R</strain>
    </source>
</reference>
<organism>
    <name type="scientific">Streptococcus agalactiae serotype V (strain ATCC BAA-611 / 2603 V/R)</name>
    <dbReference type="NCBI Taxonomy" id="208435"/>
    <lineage>
        <taxon>Bacteria</taxon>
        <taxon>Bacillati</taxon>
        <taxon>Bacillota</taxon>
        <taxon>Bacilli</taxon>
        <taxon>Lactobacillales</taxon>
        <taxon>Streptococcaceae</taxon>
        <taxon>Streptococcus</taxon>
    </lineage>
</organism>
<sequence length="261" mass="28972">MPNLLEKTRKITSILQRSVDSLDAELPYNTMAAQLADIIDCNACIINGGGNLLGYAMKYKTNTDRVEEFFETKQFPDYYVKSASRVYDTEANLSVDNDLSIFPVETKENFQDGITTIAPIYGGGMRLGTFIIWRNDKEFSDDDLILVEIASTVVGIQLLNLQTENLEENIRKQTAVTMAINTLSYSEMKAVAAILGELDGLEGRLTASVIADRIGITRSVIVNALRKLESAGIIESRSLGMKGTYLKVINEGIFDKLKEYN</sequence>